<gene>
    <name evidence="2" type="primary">DTX36</name>
    <name evidence="4" type="ordered locus">At1g11670</name>
    <name evidence="5" type="ORF">F25C20.18</name>
</gene>
<name>DTX36_ARATH</name>
<feature type="chain" id="PRO_0000434077" description="Protein DETOXIFICATION 36">
    <location>
        <begin position="1"/>
        <end position="503"/>
    </location>
</feature>
<feature type="transmembrane region" description="Helical" evidence="1">
    <location>
        <begin position="54"/>
        <end position="74"/>
    </location>
</feature>
<feature type="transmembrane region" description="Helical" evidence="1">
    <location>
        <begin position="87"/>
        <end position="107"/>
    </location>
</feature>
<feature type="transmembrane region" description="Helical" evidence="1">
    <location>
        <begin position="137"/>
        <end position="157"/>
    </location>
</feature>
<feature type="transmembrane region" description="Helical" evidence="1">
    <location>
        <begin position="166"/>
        <end position="186"/>
    </location>
</feature>
<feature type="transmembrane region" description="Helical" evidence="1">
    <location>
        <begin position="203"/>
        <end position="223"/>
    </location>
</feature>
<feature type="transmembrane region" description="Helical" evidence="1">
    <location>
        <begin position="225"/>
        <end position="245"/>
    </location>
</feature>
<feature type="transmembrane region" description="Helical" evidence="1">
    <location>
        <begin position="271"/>
        <end position="293"/>
    </location>
</feature>
<feature type="transmembrane region" description="Helical" evidence="1">
    <location>
        <begin position="313"/>
        <end position="333"/>
    </location>
</feature>
<feature type="transmembrane region" description="Helical" evidence="1">
    <location>
        <begin position="355"/>
        <end position="375"/>
    </location>
</feature>
<feature type="transmembrane region" description="Helical" evidence="1">
    <location>
        <begin position="399"/>
        <end position="419"/>
    </location>
</feature>
<feature type="transmembrane region" description="Helical" evidence="1">
    <location>
        <begin position="427"/>
        <end position="447"/>
    </location>
</feature>
<feature type="transmembrane region" description="Helical" evidence="1">
    <location>
        <begin position="456"/>
        <end position="476"/>
    </location>
</feature>
<feature type="sequence conflict" description="In Ref. 3; AAM98160." evidence="3" ref="3">
    <original>G</original>
    <variation>D</variation>
    <location>
        <position position="463"/>
    </location>
</feature>
<feature type="sequence conflict" description="In Ref. 4; BAD95082." evidence="3" ref="4">
    <original>D</original>
    <variation>V</variation>
    <location>
        <position position="481"/>
    </location>
</feature>
<evidence type="ECO:0000255" key="1"/>
<evidence type="ECO:0000303" key="2">
    <source>
    </source>
</evidence>
<evidence type="ECO:0000305" key="3"/>
<evidence type="ECO:0000312" key="4">
    <source>
        <dbReference type="Araport" id="AT1G11670"/>
    </source>
</evidence>
<evidence type="ECO:0000312" key="5">
    <source>
        <dbReference type="EMBL" id="AAD30255.1"/>
    </source>
</evidence>
<protein>
    <recommendedName>
        <fullName evidence="2">Protein DETOXIFICATION 36</fullName>
        <shortName evidence="2">AtDTX36</shortName>
    </recommendedName>
    <alternativeName>
        <fullName evidence="3">Multidrug and toxic compound extrusion protein 36</fullName>
        <shortName evidence="3">MATE protein 36</shortName>
    </alternativeName>
</protein>
<accession>Q9SAB0</accession>
<accession>Q56WC6</accession>
<accession>Q8L714</accession>
<comment type="subcellular location">
    <subcellularLocation>
        <location evidence="1">Membrane</location>
        <topology evidence="1">Multi-pass membrane protein</topology>
    </subcellularLocation>
</comment>
<comment type="similarity">
    <text evidence="3">Belongs to the multi antimicrobial extrusion (MATE) (TC 2.A.66.1) family.</text>
</comment>
<comment type="sequence caution" evidence="3">
    <conflict type="erroneous initiation">
        <sequence resource="EMBL-CDS" id="BAD95082"/>
    </conflict>
    <text>Truncated N-terminus.</text>
</comment>
<keyword id="KW-0472">Membrane</keyword>
<keyword id="KW-1185">Reference proteome</keyword>
<keyword id="KW-0812">Transmembrane</keyword>
<keyword id="KW-1133">Transmembrane helix</keyword>
<keyword id="KW-0813">Transport</keyword>
<proteinExistence type="evidence at transcript level"/>
<organism>
    <name type="scientific">Arabidopsis thaliana</name>
    <name type="common">Mouse-ear cress</name>
    <dbReference type="NCBI Taxonomy" id="3702"/>
    <lineage>
        <taxon>Eukaryota</taxon>
        <taxon>Viridiplantae</taxon>
        <taxon>Streptophyta</taxon>
        <taxon>Embryophyta</taxon>
        <taxon>Tracheophyta</taxon>
        <taxon>Spermatophyta</taxon>
        <taxon>Magnoliopsida</taxon>
        <taxon>eudicotyledons</taxon>
        <taxon>Gunneridae</taxon>
        <taxon>Pentapetalae</taxon>
        <taxon>rosids</taxon>
        <taxon>malvids</taxon>
        <taxon>Brassicales</taxon>
        <taxon>Brassicaceae</taxon>
        <taxon>Camelineae</taxon>
        <taxon>Arabidopsis</taxon>
    </lineage>
</organism>
<sequence>MGSEATTAVNNLQQPLLESTKSEADFRMESVLTDTHLSYFRRIYLASLIEMKYLFHLAAPAIFVYVINNGMSMLTRIFAGRLGSMQLAAASLGNSGFNMFTLGLMLGMGSAVETLCGQAHGAHRYDMLGVYLQRSTIVLVITGLPMTLLFIFSKPLLISLGEPADVASVASVFVYGMIPMIFAYAVNFPIQKFLQSQSIVTPSAYISAATLVIHLILSWLSVFKFGWGLLGLSVVHSLSWWIIVLAQIIYIKISPRCRRTWDGFSWKAFDGLWDFFQLSAASAVMLCLESWYSQILVLLAGLLKDPELALDSLAICMSISAMSFMVSVGFNAAASVRVSNELGAGNPRSAAFSTAVTTGVSFLLSLFEAIVILSWRHVISYIFTDSPAVAEAVAELSPFLAITIVLNGVQPVLSGVAVGCGWQAYVAYVNIGCYYIVGIPIGYVLGFTYDMGARGIWTGMIGGTLMQTIILVIVTFRTDWDKEVEKASRRLDQWEDTSPLLKQ</sequence>
<dbReference type="EMBL" id="AC007296">
    <property type="protein sequence ID" value="AAD30255.1"/>
    <property type="molecule type" value="Genomic_DNA"/>
</dbReference>
<dbReference type="EMBL" id="CP002684">
    <property type="protein sequence ID" value="AEE28768.1"/>
    <property type="molecule type" value="Genomic_DNA"/>
</dbReference>
<dbReference type="EMBL" id="AY140018">
    <property type="protein sequence ID" value="AAM98160.1"/>
    <property type="molecule type" value="mRNA"/>
</dbReference>
<dbReference type="EMBL" id="AK222116">
    <property type="protein sequence ID" value="BAD95082.1"/>
    <property type="status" value="ALT_INIT"/>
    <property type="molecule type" value="mRNA"/>
</dbReference>
<dbReference type="PIR" id="C86250">
    <property type="entry name" value="C86250"/>
</dbReference>
<dbReference type="RefSeq" id="NP_172632.1">
    <property type="nucleotide sequence ID" value="NM_101039.4"/>
</dbReference>
<dbReference type="SMR" id="Q9SAB0"/>
<dbReference type="FunCoup" id="Q9SAB0">
    <property type="interactions" value="265"/>
</dbReference>
<dbReference type="STRING" id="3702.Q9SAB0"/>
<dbReference type="PaxDb" id="3702-AT1G11670.1"/>
<dbReference type="ProteomicsDB" id="222224"/>
<dbReference type="EnsemblPlants" id="AT1G11670.1">
    <property type="protein sequence ID" value="AT1G11670.1"/>
    <property type="gene ID" value="AT1G11670"/>
</dbReference>
<dbReference type="GeneID" id="837711"/>
<dbReference type="Gramene" id="AT1G11670.1">
    <property type="protein sequence ID" value="AT1G11670.1"/>
    <property type="gene ID" value="AT1G11670"/>
</dbReference>
<dbReference type="KEGG" id="ath:AT1G11670"/>
<dbReference type="Araport" id="AT1G11670"/>
<dbReference type="TAIR" id="AT1G11670"/>
<dbReference type="eggNOG" id="KOG1347">
    <property type="taxonomic scope" value="Eukaryota"/>
</dbReference>
<dbReference type="HOGENOM" id="CLU_012893_1_4_1"/>
<dbReference type="InParanoid" id="Q9SAB0"/>
<dbReference type="OMA" id="SKPIMIL"/>
<dbReference type="OrthoDB" id="2126698at2759"/>
<dbReference type="PhylomeDB" id="Q9SAB0"/>
<dbReference type="PRO" id="PR:Q9SAB0"/>
<dbReference type="Proteomes" id="UP000006548">
    <property type="component" value="Chromosome 1"/>
</dbReference>
<dbReference type="ExpressionAtlas" id="Q9SAB0">
    <property type="expression patterns" value="baseline and differential"/>
</dbReference>
<dbReference type="GO" id="GO:0016020">
    <property type="term" value="C:membrane"/>
    <property type="evidence" value="ECO:0007669"/>
    <property type="project" value="UniProtKB-SubCell"/>
</dbReference>
<dbReference type="GO" id="GO:0015297">
    <property type="term" value="F:antiporter activity"/>
    <property type="evidence" value="ECO:0007669"/>
    <property type="project" value="InterPro"/>
</dbReference>
<dbReference type="GO" id="GO:0042910">
    <property type="term" value="F:xenobiotic transmembrane transporter activity"/>
    <property type="evidence" value="ECO:0007669"/>
    <property type="project" value="InterPro"/>
</dbReference>
<dbReference type="GO" id="GO:1990961">
    <property type="term" value="P:xenobiotic detoxification by transmembrane export across the plasma membrane"/>
    <property type="evidence" value="ECO:0007669"/>
    <property type="project" value="InterPro"/>
</dbReference>
<dbReference type="CDD" id="cd13132">
    <property type="entry name" value="MATE_eukaryotic"/>
    <property type="match status" value="1"/>
</dbReference>
<dbReference type="InterPro" id="IPR045069">
    <property type="entry name" value="MATE_euk"/>
</dbReference>
<dbReference type="InterPro" id="IPR002528">
    <property type="entry name" value="MATE_fam"/>
</dbReference>
<dbReference type="NCBIfam" id="TIGR00797">
    <property type="entry name" value="matE"/>
    <property type="match status" value="1"/>
</dbReference>
<dbReference type="PANTHER" id="PTHR11206">
    <property type="entry name" value="MULTIDRUG RESISTANCE PROTEIN"/>
    <property type="match status" value="1"/>
</dbReference>
<dbReference type="Pfam" id="PF01554">
    <property type="entry name" value="MatE"/>
    <property type="match status" value="2"/>
</dbReference>
<reference key="1">
    <citation type="journal article" date="2000" name="Nature">
        <title>Sequence and analysis of chromosome 1 of the plant Arabidopsis thaliana.</title>
        <authorList>
            <person name="Theologis A."/>
            <person name="Ecker J.R."/>
            <person name="Palm C.J."/>
            <person name="Federspiel N.A."/>
            <person name="Kaul S."/>
            <person name="White O."/>
            <person name="Alonso J."/>
            <person name="Altafi H."/>
            <person name="Araujo R."/>
            <person name="Bowman C.L."/>
            <person name="Brooks S.Y."/>
            <person name="Buehler E."/>
            <person name="Chan A."/>
            <person name="Chao Q."/>
            <person name="Chen H."/>
            <person name="Cheuk R.F."/>
            <person name="Chin C.W."/>
            <person name="Chung M.K."/>
            <person name="Conn L."/>
            <person name="Conway A.B."/>
            <person name="Conway A.R."/>
            <person name="Creasy T.H."/>
            <person name="Dewar K."/>
            <person name="Dunn P."/>
            <person name="Etgu P."/>
            <person name="Feldblyum T.V."/>
            <person name="Feng J.-D."/>
            <person name="Fong B."/>
            <person name="Fujii C.Y."/>
            <person name="Gill J.E."/>
            <person name="Goldsmith A.D."/>
            <person name="Haas B."/>
            <person name="Hansen N.F."/>
            <person name="Hughes B."/>
            <person name="Huizar L."/>
            <person name="Hunter J.L."/>
            <person name="Jenkins J."/>
            <person name="Johnson-Hopson C."/>
            <person name="Khan S."/>
            <person name="Khaykin E."/>
            <person name="Kim C.J."/>
            <person name="Koo H.L."/>
            <person name="Kremenetskaia I."/>
            <person name="Kurtz D.B."/>
            <person name="Kwan A."/>
            <person name="Lam B."/>
            <person name="Langin-Hooper S."/>
            <person name="Lee A."/>
            <person name="Lee J.M."/>
            <person name="Lenz C.A."/>
            <person name="Li J.H."/>
            <person name="Li Y.-P."/>
            <person name="Lin X."/>
            <person name="Liu S.X."/>
            <person name="Liu Z.A."/>
            <person name="Luros J.S."/>
            <person name="Maiti R."/>
            <person name="Marziali A."/>
            <person name="Militscher J."/>
            <person name="Miranda M."/>
            <person name="Nguyen M."/>
            <person name="Nierman W.C."/>
            <person name="Osborne B.I."/>
            <person name="Pai G."/>
            <person name="Peterson J."/>
            <person name="Pham P.K."/>
            <person name="Rizzo M."/>
            <person name="Rooney T."/>
            <person name="Rowley D."/>
            <person name="Sakano H."/>
            <person name="Salzberg S.L."/>
            <person name="Schwartz J.R."/>
            <person name="Shinn P."/>
            <person name="Southwick A.M."/>
            <person name="Sun H."/>
            <person name="Tallon L.J."/>
            <person name="Tambunga G."/>
            <person name="Toriumi M.J."/>
            <person name="Town C.D."/>
            <person name="Utterback T."/>
            <person name="Van Aken S."/>
            <person name="Vaysberg M."/>
            <person name="Vysotskaia V.S."/>
            <person name="Walker M."/>
            <person name="Wu D."/>
            <person name="Yu G."/>
            <person name="Fraser C.M."/>
            <person name="Venter J.C."/>
            <person name="Davis R.W."/>
        </authorList>
    </citation>
    <scope>NUCLEOTIDE SEQUENCE [LARGE SCALE GENOMIC DNA]</scope>
    <source>
        <strain>cv. Columbia</strain>
    </source>
</reference>
<reference key="2">
    <citation type="journal article" date="2017" name="Plant J.">
        <title>Araport11: a complete reannotation of the Arabidopsis thaliana reference genome.</title>
        <authorList>
            <person name="Cheng C.Y."/>
            <person name="Krishnakumar V."/>
            <person name="Chan A.P."/>
            <person name="Thibaud-Nissen F."/>
            <person name="Schobel S."/>
            <person name="Town C.D."/>
        </authorList>
    </citation>
    <scope>GENOME REANNOTATION</scope>
    <source>
        <strain>cv. Columbia</strain>
    </source>
</reference>
<reference key="3">
    <citation type="journal article" date="2003" name="Science">
        <title>Empirical analysis of transcriptional activity in the Arabidopsis genome.</title>
        <authorList>
            <person name="Yamada K."/>
            <person name="Lim J."/>
            <person name="Dale J.M."/>
            <person name="Chen H."/>
            <person name="Shinn P."/>
            <person name="Palm C.J."/>
            <person name="Southwick A.M."/>
            <person name="Wu H.C."/>
            <person name="Kim C.J."/>
            <person name="Nguyen M."/>
            <person name="Pham P.K."/>
            <person name="Cheuk R.F."/>
            <person name="Karlin-Newmann G."/>
            <person name="Liu S.X."/>
            <person name="Lam B."/>
            <person name="Sakano H."/>
            <person name="Wu T."/>
            <person name="Yu G."/>
            <person name="Miranda M."/>
            <person name="Quach H.L."/>
            <person name="Tripp M."/>
            <person name="Chang C.H."/>
            <person name="Lee J.M."/>
            <person name="Toriumi M.J."/>
            <person name="Chan M.M."/>
            <person name="Tang C.C."/>
            <person name="Onodera C.S."/>
            <person name="Deng J.M."/>
            <person name="Akiyama K."/>
            <person name="Ansari Y."/>
            <person name="Arakawa T."/>
            <person name="Banh J."/>
            <person name="Banno F."/>
            <person name="Bowser L."/>
            <person name="Brooks S.Y."/>
            <person name="Carninci P."/>
            <person name="Chao Q."/>
            <person name="Choy N."/>
            <person name="Enju A."/>
            <person name="Goldsmith A.D."/>
            <person name="Gurjal M."/>
            <person name="Hansen N.F."/>
            <person name="Hayashizaki Y."/>
            <person name="Johnson-Hopson C."/>
            <person name="Hsuan V.W."/>
            <person name="Iida K."/>
            <person name="Karnes M."/>
            <person name="Khan S."/>
            <person name="Koesema E."/>
            <person name="Ishida J."/>
            <person name="Jiang P.X."/>
            <person name="Jones T."/>
            <person name="Kawai J."/>
            <person name="Kamiya A."/>
            <person name="Meyers C."/>
            <person name="Nakajima M."/>
            <person name="Narusaka M."/>
            <person name="Seki M."/>
            <person name="Sakurai T."/>
            <person name="Satou M."/>
            <person name="Tamse R."/>
            <person name="Vaysberg M."/>
            <person name="Wallender E.K."/>
            <person name="Wong C."/>
            <person name="Yamamura Y."/>
            <person name="Yuan S."/>
            <person name="Shinozaki K."/>
            <person name="Davis R.W."/>
            <person name="Theologis A."/>
            <person name="Ecker J.R."/>
        </authorList>
    </citation>
    <scope>NUCLEOTIDE SEQUENCE [LARGE SCALE MRNA]</scope>
    <source>
        <strain>cv. Columbia</strain>
    </source>
</reference>
<reference key="4">
    <citation type="submission" date="2005-03" db="EMBL/GenBank/DDBJ databases">
        <title>Large-scale analysis of RIKEN Arabidopsis full-length (RAFL) cDNAs.</title>
        <authorList>
            <person name="Totoki Y."/>
            <person name="Seki M."/>
            <person name="Ishida J."/>
            <person name="Nakajima M."/>
            <person name="Enju A."/>
            <person name="Kamiya A."/>
            <person name="Narusaka M."/>
            <person name="Shin-i T."/>
            <person name="Nakagawa M."/>
            <person name="Sakamoto N."/>
            <person name="Oishi K."/>
            <person name="Kohara Y."/>
            <person name="Kobayashi M."/>
            <person name="Toyoda A."/>
            <person name="Sakaki Y."/>
            <person name="Sakurai T."/>
            <person name="Iida K."/>
            <person name="Akiyama K."/>
            <person name="Satou M."/>
            <person name="Toyoda T."/>
            <person name="Konagaya A."/>
            <person name="Carninci P."/>
            <person name="Kawai J."/>
            <person name="Hayashizaki Y."/>
            <person name="Shinozaki K."/>
        </authorList>
    </citation>
    <scope>NUCLEOTIDE SEQUENCE [LARGE SCALE MRNA] OF 266-503</scope>
    <source>
        <strain>cv. Columbia</strain>
    </source>
</reference>
<reference key="5">
    <citation type="journal article" date="2002" name="J. Biol. Chem.">
        <title>Functional cloning and characterization of a plant efflux carrier for multidrug and heavy metal detoxification.</title>
        <authorList>
            <person name="Li L."/>
            <person name="He Z."/>
            <person name="Pandey G.K."/>
            <person name="Tsuchiya T."/>
            <person name="Luan S."/>
        </authorList>
    </citation>
    <scope>GENE FAMILY</scope>
    <scope>NOMENCLATURE</scope>
</reference>
<reference key="6">
    <citation type="journal article" date="2003" name="Eur. J. Biochem.">
        <title>The multidrug/oligosaccharidyl-lipid/polysaccharide (MOP) exporter superfamily.</title>
        <authorList>
            <person name="Hvorup R.N."/>
            <person name="Winnen B."/>
            <person name="Chang A.B."/>
            <person name="Jiang Y."/>
            <person name="Zhou X.F."/>
            <person name="Saier M.H. Jr."/>
        </authorList>
    </citation>
    <scope>GENE FAMILY</scope>
</reference>